<organism>
    <name type="scientific">Beta vulgaris</name>
    <name type="common">Sugar beet</name>
    <dbReference type="NCBI Taxonomy" id="161934"/>
    <lineage>
        <taxon>Eukaryota</taxon>
        <taxon>Viridiplantae</taxon>
        <taxon>Streptophyta</taxon>
        <taxon>Embryophyta</taxon>
        <taxon>Tracheophyta</taxon>
        <taxon>Spermatophyta</taxon>
        <taxon>Magnoliopsida</taxon>
        <taxon>eudicotyledons</taxon>
        <taxon>Gunneridae</taxon>
        <taxon>Pentapetalae</taxon>
        <taxon>Caryophyllales</taxon>
        <taxon>Chenopodiaceae</taxon>
        <taxon>Betoideae</taxon>
        <taxon>Beta</taxon>
    </lineage>
</organism>
<proteinExistence type="evidence at transcript level"/>
<dbReference type="EMBL" id="Z97067">
    <property type="protein sequence ID" value="CAB09803.1"/>
    <property type="molecule type" value="mRNA"/>
</dbReference>
<dbReference type="PIR" id="T14552">
    <property type="entry name" value="T14552"/>
</dbReference>
<dbReference type="RefSeq" id="NP_001289996.1">
    <property type="nucleotide sequence ID" value="NM_001303067.1"/>
</dbReference>
<dbReference type="SMR" id="O81918"/>
<dbReference type="GeneID" id="104893488"/>
<dbReference type="KEGG" id="bvg:104893488"/>
<dbReference type="GO" id="GO:0005829">
    <property type="term" value="C:cytosol"/>
    <property type="evidence" value="ECO:0007669"/>
    <property type="project" value="TreeGrafter"/>
</dbReference>
<dbReference type="GO" id="GO:0005853">
    <property type="term" value="C:eukaryotic translation elongation factor 1 complex"/>
    <property type="evidence" value="ECO:0007669"/>
    <property type="project" value="InterPro"/>
</dbReference>
<dbReference type="GO" id="GO:0005085">
    <property type="term" value="F:guanyl-nucleotide exchange factor activity"/>
    <property type="evidence" value="ECO:0007669"/>
    <property type="project" value="TreeGrafter"/>
</dbReference>
<dbReference type="GO" id="GO:0003746">
    <property type="term" value="F:translation elongation factor activity"/>
    <property type="evidence" value="ECO:0007669"/>
    <property type="project" value="UniProtKB-KW"/>
</dbReference>
<dbReference type="CDD" id="cd00292">
    <property type="entry name" value="EF1B"/>
    <property type="match status" value="1"/>
</dbReference>
<dbReference type="FunFam" id="3.30.70.60:FF:000001">
    <property type="entry name" value="Elongation factor 1-beta 1 like"/>
    <property type="match status" value="1"/>
</dbReference>
<dbReference type="FunFam" id="1.20.1050.130:FF:000006">
    <property type="entry name" value="Elongation factor 1-delta 1"/>
    <property type="match status" value="1"/>
</dbReference>
<dbReference type="Gene3D" id="1.20.1050.130">
    <property type="match status" value="1"/>
</dbReference>
<dbReference type="Gene3D" id="3.30.70.60">
    <property type="match status" value="1"/>
</dbReference>
<dbReference type="InterPro" id="IPR036219">
    <property type="entry name" value="eEF-1beta-like_sf"/>
</dbReference>
<dbReference type="InterPro" id="IPR049720">
    <property type="entry name" value="EF1B_bsu/dsu"/>
</dbReference>
<dbReference type="InterPro" id="IPR014038">
    <property type="entry name" value="EF1B_bsu/dsu_GNE"/>
</dbReference>
<dbReference type="InterPro" id="IPR036282">
    <property type="entry name" value="Glutathione-S-Trfase_C_sf"/>
</dbReference>
<dbReference type="InterPro" id="IPR014717">
    <property type="entry name" value="Transl_elong_EF1B/ribsomal_bS6"/>
</dbReference>
<dbReference type="InterPro" id="IPR001326">
    <property type="entry name" value="Transl_elong_EF1B_B/D_CS"/>
</dbReference>
<dbReference type="PANTHER" id="PTHR11595">
    <property type="entry name" value="EF-HAND AND COILED-COIL DOMAIN-CONTAINING FAMILY MEMBER"/>
    <property type="match status" value="1"/>
</dbReference>
<dbReference type="PANTHER" id="PTHR11595:SF21">
    <property type="entry name" value="ELONGATION FACTOR 1-BETA"/>
    <property type="match status" value="1"/>
</dbReference>
<dbReference type="Pfam" id="PF00736">
    <property type="entry name" value="EF1_GNE"/>
    <property type="match status" value="1"/>
</dbReference>
<dbReference type="SMART" id="SM00888">
    <property type="entry name" value="EF1_GNE"/>
    <property type="match status" value="1"/>
</dbReference>
<dbReference type="SUPFAM" id="SSF54984">
    <property type="entry name" value="eEF-1beta-like"/>
    <property type="match status" value="1"/>
</dbReference>
<dbReference type="SUPFAM" id="SSF47616">
    <property type="entry name" value="GST C-terminal domain-like"/>
    <property type="match status" value="1"/>
</dbReference>
<dbReference type="PROSITE" id="PS00824">
    <property type="entry name" value="EF1BD_1"/>
    <property type="match status" value="1"/>
</dbReference>
<dbReference type="PROSITE" id="PS00825">
    <property type="entry name" value="EF1BD_2"/>
    <property type="match status" value="1"/>
</dbReference>
<comment type="function">
    <text>EF-1-beta and EF-1-beta' stimulate the exchange of GDP bound to EF-1-alpha to GTP.</text>
</comment>
<comment type="subunit">
    <text evidence="1">EF-1 is composed of 4 subunits: alpha, beta (1B-alpha=beta'), delta (1B-beta), and gamma (1B-gamma).</text>
</comment>
<comment type="similarity">
    <text evidence="3">Belongs to the EF-1-beta/EF-1-delta family.</text>
</comment>
<protein>
    <recommendedName>
        <fullName>Elongation factor 1-delta</fullName>
        <shortName>EF-1-delta</shortName>
    </recommendedName>
    <alternativeName>
        <fullName>Elongation factor 1B-beta</fullName>
    </alternativeName>
    <alternativeName>
        <fullName>eEF-1B beta</fullName>
    </alternativeName>
</protein>
<evidence type="ECO:0000250" key="1"/>
<evidence type="ECO:0000256" key="2">
    <source>
        <dbReference type="SAM" id="MobiDB-lite"/>
    </source>
</evidence>
<evidence type="ECO:0000305" key="3"/>
<name>EF1D_BETVU</name>
<reference key="1">
    <citation type="submission" date="1997-06" db="EMBL/GenBank/DDBJ databases">
        <title>Nucleotide sequence of the elongation factor 1-beta from Beta vulgaris.</title>
        <authorList>
            <person name="Viereck R."/>
        </authorList>
    </citation>
    <scope>NUCLEOTIDE SEQUENCE [MRNA]</scope>
    <source>
        <strain>cv. Inzuchtlinie KWS VV-D/ZR5</strain>
        <tissue>Leaf</tissue>
    </source>
</reference>
<feature type="initiator methionine" description="Removed" evidence="1">
    <location>
        <position position="1"/>
    </location>
</feature>
<feature type="chain" id="PRO_0000155038" description="Elongation factor 1-delta">
    <location>
        <begin position="2"/>
        <end position="231"/>
    </location>
</feature>
<feature type="region of interest" description="Disordered" evidence="2">
    <location>
        <begin position="75"/>
        <end position="136"/>
    </location>
</feature>
<feature type="compositionally biased region" description="Acidic residues" evidence="2">
    <location>
        <begin position="101"/>
        <end position="117"/>
    </location>
</feature>
<feature type="compositionally biased region" description="Basic and acidic residues" evidence="2">
    <location>
        <begin position="118"/>
        <end position="127"/>
    </location>
</feature>
<sequence>MAVTFSDLSSPAGLDSLDAYLLSRSYITGYQASKDDLTVFSAVPKASLASYVNVSRWYKHIDALLRISGVSGEGSGVTVEGNAPASDVATPPAADSKASAADDDDDDDVDLFGEETEEEKKAAEERAAAAAAKPAKKKESGKSSVLLDVKPWDDETDMKKLEEAVRSVQQEGLTLGASKLVPVGYGIKKLTIMMTIVDDLVSVDNLIEDYLTVEPINEYVQSCDIVAFNKI</sequence>
<keyword id="KW-0251">Elongation factor</keyword>
<keyword id="KW-0648">Protein biosynthesis</keyword>
<accession>O81918</accession>